<accession>P85996</accession>
<feature type="chain" id="PRO_0000363741" description="Peroxidase 3">
    <location>
        <begin position="1" status="less than"/>
        <end position="15" status="greater than"/>
    </location>
</feature>
<feature type="unsure residue" description="M or F">
    <location>
        <position position="1"/>
    </location>
</feature>
<feature type="unsure residue" description="I or L">
    <location>
        <position position="4"/>
    </location>
</feature>
<feature type="unsure residue" description="L or I">
    <location>
        <position position="7"/>
    </location>
</feature>
<feature type="unsure residue" description="I or L">
    <location>
        <position position="14"/>
    </location>
</feature>
<feature type="non-terminal residue">
    <location>
        <position position="1"/>
    </location>
</feature>
<feature type="non-terminal residue">
    <location>
        <position position="15"/>
    </location>
</feature>
<dbReference type="EC" id="1.11.1.7"/>
<dbReference type="STRING" id="4081.P85996"/>
<dbReference type="InParanoid" id="P85996"/>
<dbReference type="Proteomes" id="UP000004994">
    <property type="component" value="Unplaced"/>
</dbReference>
<dbReference type="GO" id="GO:0005576">
    <property type="term" value="C:extracellular region"/>
    <property type="evidence" value="ECO:0007669"/>
    <property type="project" value="UniProtKB-SubCell"/>
</dbReference>
<dbReference type="GO" id="GO:0140825">
    <property type="term" value="F:lactoperoxidase activity"/>
    <property type="evidence" value="ECO:0007669"/>
    <property type="project" value="UniProtKB-EC"/>
</dbReference>
<dbReference type="GO" id="GO:0046872">
    <property type="term" value="F:metal ion binding"/>
    <property type="evidence" value="ECO:0007669"/>
    <property type="project" value="UniProtKB-KW"/>
</dbReference>
<dbReference type="GO" id="GO:0042744">
    <property type="term" value="P:hydrogen peroxide catabolic process"/>
    <property type="evidence" value="ECO:0007669"/>
    <property type="project" value="UniProtKB-KW"/>
</dbReference>
<comment type="function">
    <text evidence="4">Removal of H(2)O(2), oxidation of toxic reductants, biosynthesis and degradation of lignin, suberization, auxin catabolism, response to environmental stresses such as wounding, pathogen attack and oxidative stress. These functions might be dependent on each isozyme/isoform in each plant tissue.</text>
</comment>
<comment type="catalytic activity">
    <reaction>
        <text>2 a phenolic donor + H2O2 = 2 a phenolic radical donor + 2 H2O</text>
        <dbReference type="Rhea" id="RHEA:56136"/>
        <dbReference type="ChEBI" id="CHEBI:15377"/>
        <dbReference type="ChEBI" id="CHEBI:16240"/>
        <dbReference type="ChEBI" id="CHEBI:139520"/>
        <dbReference type="ChEBI" id="CHEBI:139521"/>
        <dbReference type="EC" id="1.11.1.7"/>
    </reaction>
</comment>
<comment type="cofactor">
    <cofactor evidence="1 3">
        <name>heme b</name>
        <dbReference type="ChEBI" id="CHEBI:60344"/>
    </cofactor>
    <text evidence="1 3">Binds 1 heme b (iron(II)-protoporphyrin IX) group per subunit.</text>
</comment>
<comment type="cofactor">
    <cofactor evidence="1 3">
        <name>Ca(2+)</name>
        <dbReference type="ChEBI" id="CHEBI:29108"/>
    </cofactor>
    <text evidence="1 3">Binds 2 calcium ions per subunit.</text>
</comment>
<comment type="subcellular location">
    <subcellularLocation>
        <location evidence="2 3">Secreted</location>
    </subcellularLocation>
</comment>
<comment type="similarity">
    <text evidence="3">Belongs to the peroxidase family. Classical plant (class III) peroxidase subfamily.</text>
</comment>
<organism>
    <name type="scientific">Solanum lycopersicum</name>
    <name type="common">Tomato</name>
    <name type="synonym">Lycopersicon esculentum</name>
    <dbReference type="NCBI Taxonomy" id="4081"/>
    <lineage>
        <taxon>Eukaryota</taxon>
        <taxon>Viridiplantae</taxon>
        <taxon>Streptophyta</taxon>
        <taxon>Embryophyta</taxon>
        <taxon>Tracheophyta</taxon>
        <taxon>Spermatophyta</taxon>
        <taxon>Magnoliopsida</taxon>
        <taxon>eudicotyledons</taxon>
        <taxon>Gunneridae</taxon>
        <taxon>Pentapetalae</taxon>
        <taxon>asterids</taxon>
        <taxon>lamiids</taxon>
        <taxon>Solanales</taxon>
        <taxon>Solanaceae</taxon>
        <taxon>Solanoideae</taxon>
        <taxon>Solaneae</taxon>
        <taxon>Solanum</taxon>
        <taxon>Solanum subgen. Lycopersicon</taxon>
    </lineage>
</organism>
<proteinExistence type="evidence at protein level"/>
<keyword id="KW-0106">Calcium</keyword>
<keyword id="KW-0903">Direct protein sequencing</keyword>
<keyword id="KW-0349">Heme</keyword>
<keyword id="KW-0376">Hydrogen peroxide</keyword>
<keyword id="KW-0408">Iron</keyword>
<keyword id="KW-0479">Metal-binding</keyword>
<keyword id="KW-0560">Oxidoreductase</keyword>
<keyword id="KW-0575">Peroxidase</keyword>
<keyword id="KW-1185">Reference proteome</keyword>
<keyword id="KW-0964">Secreted</keyword>
<protein>
    <recommendedName>
        <fullName evidence="1">Peroxidase 3</fullName>
        <ecNumber>1.11.1.7</ecNumber>
    </recommendedName>
</protein>
<sequence>MGRIGVLTGNAGEIR</sequence>
<reference evidence="4" key="1">
    <citation type="submission" date="2008-07" db="UniProtKB">
        <authorList>
            <person name="Almagro L."/>
            <person name="Calderon A.A."/>
            <person name="Pedreno M.A."/>
        </authorList>
    </citation>
    <scope>PROTEIN SEQUENCE</scope>
</reference>
<name>PER3_SOLLC</name>
<evidence type="ECO:0000250" key="1">
    <source>
        <dbReference type="UniProtKB" id="P19135"/>
    </source>
</evidence>
<evidence type="ECO:0000250" key="2">
    <source>
        <dbReference type="UniProtKB" id="P84516"/>
    </source>
</evidence>
<evidence type="ECO:0000255" key="3">
    <source>
        <dbReference type="PROSITE-ProRule" id="PRU00297"/>
    </source>
</evidence>
<evidence type="ECO:0000305" key="4"/>